<evidence type="ECO:0000250" key="1"/>
<evidence type="ECO:0000250" key="2">
    <source>
        <dbReference type="UniProtKB" id="P14231"/>
    </source>
</evidence>
<evidence type="ECO:0000255" key="3"/>
<evidence type="ECO:0000305" key="4"/>
<dbReference type="EMBL" id="AY069937">
    <property type="protein sequence ID" value="AAL55426.1"/>
    <property type="molecule type" value="mRNA"/>
</dbReference>
<dbReference type="RefSeq" id="NP_001076249.1">
    <property type="nucleotide sequence ID" value="NM_001082780.1"/>
</dbReference>
<dbReference type="SMR" id="Q8WMG3"/>
<dbReference type="FunCoup" id="Q8WMG3">
    <property type="interactions" value="262"/>
</dbReference>
<dbReference type="STRING" id="9986.ENSOCUP00000002598"/>
<dbReference type="GlyCosmos" id="Q8WMG3">
    <property type="glycosylation" value="7 sites, No reported glycans"/>
</dbReference>
<dbReference type="PaxDb" id="9986-ENSOCUP00000002598"/>
<dbReference type="Ensembl" id="ENSOCUT00000002988.4">
    <property type="protein sequence ID" value="ENSOCUP00000002598.2"/>
    <property type="gene ID" value="ENSOCUG00000002988.4"/>
</dbReference>
<dbReference type="GeneID" id="100009577"/>
<dbReference type="KEGG" id="ocu:100009577"/>
<dbReference type="CTD" id="482"/>
<dbReference type="eggNOG" id="KOG3927">
    <property type="taxonomic scope" value="Eukaryota"/>
</dbReference>
<dbReference type="GeneTree" id="ENSGT01030000234579"/>
<dbReference type="HOGENOM" id="CLU_057702_1_1_1"/>
<dbReference type="InParanoid" id="Q8WMG3"/>
<dbReference type="OMA" id="IGDPTYY"/>
<dbReference type="OrthoDB" id="5912413at2759"/>
<dbReference type="TreeFam" id="TF314618"/>
<dbReference type="Proteomes" id="UP000001811">
    <property type="component" value="Chromosome 19"/>
</dbReference>
<dbReference type="Bgee" id="ENSOCUG00000002988">
    <property type="expression patterns" value="Expressed in frontal cortex and 17 other cell types or tissues"/>
</dbReference>
<dbReference type="GO" id="GO:0016324">
    <property type="term" value="C:apical plasma membrane"/>
    <property type="evidence" value="ECO:0007669"/>
    <property type="project" value="Ensembl"/>
</dbReference>
<dbReference type="GO" id="GO:0097450">
    <property type="term" value="C:astrocyte end-foot"/>
    <property type="evidence" value="ECO:0007669"/>
    <property type="project" value="Ensembl"/>
</dbReference>
<dbReference type="GO" id="GO:0044298">
    <property type="term" value="C:cell body membrane"/>
    <property type="evidence" value="ECO:0007669"/>
    <property type="project" value="Ensembl"/>
</dbReference>
<dbReference type="GO" id="GO:0031253">
    <property type="term" value="C:cell projection membrane"/>
    <property type="evidence" value="ECO:0007669"/>
    <property type="project" value="Ensembl"/>
</dbReference>
<dbReference type="GO" id="GO:0005737">
    <property type="term" value="C:cytoplasm"/>
    <property type="evidence" value="ECO:0007669"/>
    <property type="project" value="Ensembl"/>
</dbReference>
<dbReference type="GO" id="GO:0009897">
    <property type="term" value="C:external side of plasma membrane"/>
    <property type="evidence" value="ECO:0007669"/>
    <property type="project" value="Ensembl"/>
</dbReference>
<dbReference type="GO" id="GO:0016328">
    <property type="term" value="C:lateral plasma membrane"/>
    <property type="evidence" value="ECO:0007669"/>
    <property type="project" value="Ensembl"/>
</dbReference>
<dbReference type="GO" id="GO:0098984">
    <property type="term" value="C:neuron to neuron synapse"/>
    <property type="evidence" value="ECO:0007669"/>
    <property type="project" value="Ensembl"/>
</dbReference>
<dbReference type="GO" id="GO:0001917">
    <property type="term" value="C:photoreceptor inner segment"/>
    <property type="evidence" value="ECO:0007669"/>
    <property type="project" value="Ensembl"/>
</dbReference>
<dbReference type="GO" id="GO:0005890">
    <property type="term" value="C:sodium:potassium-exchanging ATPase complex"/>
    <property type="evidence" value="ECO:0007669"/>
    <property type="project" value="Ensembl"/>
</dbReference>
<dbReference type="GO" id="GO:0001671">
    <property type="term" value="F:ATPase activator activity"/>
    <property type="evidence" value="ECO:0007669"/>
    <property type="project" value="Ensembl"/>
</dbReference>
<dbReference type="GO" id="GO:0051117">
    <property type="term" value="F:ATPase binding"/>
    <property type="evidence" value="ECO:0007669"/>
    <property type="project" value="Ensembl"/>
</dbReference>
<dbReference type="GO" id="GO:0030674">
    <property type="term" value="F:protein-macromolecule adaptor activity"/>
    <property type="evidence" value="ECO:0007669"/>
    <property type="project" value="Ensembl"/>
</dbReference>
<dbReference type="GO" id="GO:0141109">
    <property type="term" value="F:transporter activator activity"/>
    <property type="evidence" value="ECO:0007669"/>
    <property type="project" value="Ensembl"/>
</dbReference>
<dbReference type="GO" id="GO:0031589">
    <property type="term" value="P:cell-substrate adhesion"/>
    <property type="evidence" value="ECO:0007669"/>
    <property type="project" value="Ensembl"/>
</dbReference>
<dbReference type="GO" id="GO:0030007">
    <property type="term" value="P:intracellular potassium ion homeostasis"/>
    <property type="evidence" value="ECO:0007669"/>
    <property type="project" value="Ensembl"/>
</dbReference>
<dbReference type="GO" id="GO:0006883">
    <property type="term" value="P:intracellular sodium ion homeostasis"/>
    <property type="evidence" value="ECO:0007669"/>
    <property type="project" value="Ensembl"/>
</dbReference>
<dbReference type="GO" id="GO:0021670">
    <property type="term" value="P:lateral ventricle development"/>
    <property type="evidence" value="ECO:0007669"/>
    <property type="project" value="Ensembl"/>
</dbReference>
<dbReference type="GO" id="GO:0086009">
    <property type="term" value="P:membrane repolarization"/>
    <property type="evidence" value="ECO:0007669"/>
    <property type="project" value="Ensembl"/>
</dbReference>
<dbReference type="GO" id="GO:0061744">
    <property type="term" value="P:motor behavior"/>
    <property type="evidence" value="ECO:0007669"/>
    <property type="project" value="Ensembl"/>
</dbReference>
<dbReference type="GO" id="GO:1903976">
    <property type="term" value="P:negative regulation of glial cell migration"/>
    <property type="evidence" value="ECO:0007669"/>
    <property type="project" value="Ensembl"/>
</dbReference>
<dbReference type="GO" id="GO:0021944">
    <property type="term" value="P:neuronal-glial interaction involved in hindbrain glial-mediated radial cell migration"/>
    <property type="evidence" value="ECO:0007669"/>
    <property type="project" value="Ensembl"/>
</dbReference>
<dbReference type="GO" id="GO:0045494">
    <property type="term" value="P:photoreceptor cell maintenance"/>
    <property type="evidence" value="ECO:0007669"/>
    <property type="project" value="Ensembl"/>
</dbReference>
<dbReference type="GO" id="GO:0120036">
    <property type="term" value="P:plasma membrane bounded cell projection organization"/>
    <property type="evidence" value="ECO:0007669"/>
    <property type="project" value="Ensembl"/>
</dbReference>
<dbReference type="GO" id="GO:0010976">
    <property type="term" value="P:positive regulation of neuron projection development"/>
    <property type="evidence" value="ECO:0007669"/>
    <property type="project" value="Ensembl"/>
</dbReference>
<dbReference type="GO" id="GO:1903288">
    <property type="term" value="P:positive regulation of potassium ion import across plasma membrane"/>
    <property type="evidence" value="ECO:0007669"/>
    <property type="project" value="Ensembl"/>
</dbReference>
<dbReference type="GO" id="GO:1903278">
    <property type="term" value="P:positive regulation of sodium ion export across plasma membrane"/>
    <property type="evidence" value="ECO:0007669"/>
    <property type="project" value="Ensembl"/>
</dbReference>
<dbReference type="GO" id="GO:1990573">
    <property type="term" value="P:potassium ion import across plasma membrane"/>
    <property type="evidence" value="ECO:0007669"/>
    <property type="project" value="Ensembl"/>
</dbReference>
<dbReference type="GO" id="GO:0050821">
    <property type="term" value="P:protein stabilization"/>
    <property type="evidence" value="ECO:0007669"/>
    <property type="project" value="Ensembl"/>
</dbReference>
<dbReference type="GO" id="GO:0036376">
    <property type="term" value="P:sodium ion export across plasma membrane"/>
    <property type="evidence" value="ECO:0007669"/>
    <property type="project" value="Ensembl"/>
</dbReference>
<dbReference type="GO" id="GO:0021678">
    <property type="term" value="P:third ventricle development"/>
    <property type="evidence" value="ECO:0007669"/>
    <property type="project" value="Ensembl"/>
</dbReference>
<dbReference type="FunFam" id="1.20.5.170:FF:000068">
    <property type="entry name" value="Sodium/potassium-transporting ATPase subunit beta"/>
    <property type="match status" value="1"/>
</dbReference>
<dbReference type="FunFam" id="2.60.40.1660:FF:000003">
    <property type="entry name" value="Sodium/potassium-transporting ATPase subunit beta"/>
    <property type="match status" value="1"/>
</dbReference>
<dbReference type="Gene3D" id="1.20.5.170">
    <property type="match status" value="1"/>
</dbReference>
<dbReference type="Gene3D" id="2.60.40.1660">
    <property type="entry name" value="Na, k-atpase alpha subunit"/>
    <property type="match status" value="1"/>
</dbReference>
<dbReference type="InterPro" id="IPR000402">
    <property type="entry name" value="Na/K_ATPase_sub_beta"/>
</dbReference>
<dbReference type="InterPro" id="IPR038702">
    <property type="entry name" value="Na/K_ATPase_sub_beta_sf"/>
</dbReference>
<dbReference type="NCBIfam" id="TIGR01107">
    <property type="entry name" value="Na_K_ATPase_bet"/>
    <property type="match status" value="1"/>
</dbReference>
<dbReference type="PANTHER" id="PTHR11523">
    <property type="entry name" value="SODIUM/POTASSIUM-DEPENDENT ATPASE BETA SUBUNIT"/>
    <property type="match status" value="1"/>
</dbReference>
<dbReference type="PANTHER" id="PTHR11523:SF26">
    <property type="entry name" value="SODIUM_POTASSIUM-TRANSPORTING ATPASE SUBUNIT BETA-2"/>
    <property type="match status" value="1"/>
</dbReference>
<dbReference type="Pfam" id="PF00287">
    <property type="entry name" value="Na_K-ATPase"/>
    <property type="match status" value="1"/>
</dbReference>
<dbReference type="PROSITE" id="PS00390">
    <property type="entry name" value="ATPASE_NA_K_BETA_1"/>
    <property type="match status" value="1"/>
</dbReference>
<dbReference type="PROSITE" id="PS00391">
    <property type="entry name" value="ATPASE_NA_K_BETA_2"/>
    <property type="match status" value="1"/>
</dbReference>
<sequence length="290" mass="33391">MVIQKEKKSCGQVVEEWKEFVWNPRTHQFMGRTGTSWAFILLFYLVFYGFLTAMFTLTMWVMLQTVSEHTPKYQDRLATPGLMIRPKTENLDVIVNVSDTESWDQHVQKLNKFLEPYNDSIQAQKNDVCRPGRYYEQPDNGVLNYPKRACQFNRTQLGNCSGIGDPTHYGYSTGQPCVFIKMNRVINFYAGANQSMNVTCAGKRDEDAENLGNFVMFPANGNIDLMYFPYYGKKFHVNYTQPLVAVKFLNVTPNVEVNVECRINAANIATDDERDKFAGRVAFKLRINKT</sequence>
<accession>Q8WMG3</accession>
<gene>
    <name type="primary">ATP1B2</name>
</gene>
<reference key="1">
    <citation type="submission" date="2001-12" db="EMBL/GenBank/DDBJ databases">
        <title>Identification of the rabbit Na+K+ ATPase beta 2 subunit.</title>
        <authorList>
            <person name="Gumz M.L."/>
            <person name="Cain B.D."/>
        </authorList>
    </citation>
    <scope>NUCLEOTIDE SEQUENCE [MRNA]</scope>
    <source>
        <tissue>Renal medulla</tissue>
    </source>
</reference>
<organism>
    <name type="scientific">Oryctolagus cuniculus</name>
    <name type="common">Rabbit</name>
    <dbReference type="NCBI Taxonomy" id="9986"/>
    <lineage>
        <taxon>Eukaryota</taxon>
        <taxon>Metazoa</taxon>
        <taxon>Chordata</taxon>
        <taxon>Craniata</taxon>
        <taxon>Vertebrata</taxon>
        <taxon>Euteleostomi</taxon>
        <taxon>Mammalia</taxon>
        <taxon>Eutheria</taxon>
        <taxon>Euarchontoglires</taxon>
        <taxon>Glires</taxon>
        <taxon>Lagomorpha</taxon>
        <taxon>Leporidae</taxon>
        <taxon>Oryctolagus</taxon>
    </lineage>
</organism>
<protein>
    <recommendedName>
        <fullName>Sodium/potassium-transporting ATPase subunit beta-2</fullName>
    </recommendedName>
    <alternativeName>
        <fullName>Sodium/potassium-dependent ATPase subunit beta-2</fullName>
    </alternativeName>
</protein>
<keyword id="KW-0130">Cell adhesion</keyword>
<keyword id="KW-1003">Cell membrane</keyword>
<keyword id="KW-1015">Disulfide bond</keyword>
<keyword id="KW-0325">Glycoprotein</keyword>
<keyword id="KW-0406">Ion transport</keyword>
<keyword id="KW-0472">Membrane</keyword>
<keyword id="KW-0630">Potassium</keyword>
<keyword id="KW-0633">Potassium transport</keyword>
<keyword id="KW-1185">Reference proteome</keyword>
<keyword id="KW-0735">Signal-anchor</keyword>
<keyword id="KW-0915">Sodium</keyword>
<keyword id="KW-0739">Sodium transport</keyword>
<keyword id="KW-0740">Sodium/potassium transport</keyword>
<keyword id="KW-0812">Transmembrane</keyword>
<keyword id="KW-1133">Transmembrane helix</keyword>
<keyword id="KW-0813">Transport</keyword>
<feature type="chain" id="PRO_0000265960" description="Sodium/potassium-transporting ATPase subunit beta-2">
    <location>
        <begin position="1"/>
        <end position="290"/>
    </location>
</feature>
<feature type="topological domain" description="Cytoplasmic" evidence="3">
    <location>
        <begin position="1"/>
        <end position="39"/>
    </location>
</feature>
<feature type="transmembrane region" description="Helical; Signal-anchor for type II membrane protein" evidence="3">
    <location>
        <begin position="40"/>
        <end position="67"/>
    </location>
</feature>
<feature type="topological domain" description="Extracellular" evidence="3">
    <location>
        <begin position="68"/>
        <end position="290"/>
    </location>
</feature>
<feature type="region of interest" description="immunoglobulin-like" evidence="1">
    <location>
        <begin position="193"/>
        <end position="290"/>
    </location>
</feature>
<feature type="glycosylation site" description="N-linked (GlcNAc...) asparagine" evidence="3">
    <location>
        <position position="96"/>
    </location>
</feature>
<feature type="glycosylation site" description="N-linked (GlcNAc...) asparagine" evidence="3">
    <location>
        <position position="118"/>
    </location>
</feature>
<feature type="glycosylation site" description="N-linked (GlcNAc...) asparagine" evidence="3">
    <location>
        <position position="153"/>
    </location>
</feature>
<feature type="glycosylation site" description="N-linked (GlcNAc...) asparagine" evidence="3">
    <location>
        <position position="159"/>
    </location>
</feature>
<feature type="glycosylation site" description="N-linked (GlcNAc...) asparagine" evidence="3">
    <location>
        <position position="193"/>
    </location>
</feature>
<feature type="glycosylation site" description="N-linked (GlcNAc...) asparagine" evidence="3">
    <location>
        <position position="197"/>
    </location>
</feature>
<feature type="glycosylation site" description="N-linked (GlcNAc...) asparagine" evidence="3">
    <location>
        <position position="238"/>
    </location>
</feature>
<feature type="disulfide bond" evidence="1">
    <location>
        <begin position="129"/>
        <end position="150"/>
    </location>
</feature>
<feature type="disulfide bond" evidence="1">
    <location>
        <begin position="160"/>
        <end position="177"/>
    </location>
</feature>
<feature type="disulfide bond" evidence="1">
    <location>
        <begin position="200"/>
        <end position="261"/>
    </location>
</feature>
<comment type="function">
    <text evidence="1">This is the non-catalytic component of the active enzyme, which catalyzes the hydrolysis of ATP coupled with the exchange of Na(+) and K(+) ions across the plasma membrane. The exact function of the beta-2 subunit is not known (By similarity).</text>
</comment>
<comment type="function">
    <text evidence="1">Mediates cell adhesion of neurons and astrocytes, and promotes neurite outgrowth.</text>
</comment>
<comment type="subunit">
    <text evidence="2 4">The sodium/potassium-transporting ATPase is composed of a catalytic alpha subunit, an auxiliary non-catalytic beta subunit and an additional regulatory subunit. Interacts with BSG (By similarity).</text>
</comment>
<comment type="subcellular location">
    <subcellularLocation>
        <location evidence="1">Cell membrane</location>
        <topology evidence="1">Single-pass type II membrane protein</topology>
    </subcellularLocation>
</comment>
<comment type="domain">
    <text evidence="1">The C-terminal lobe folds into an immunoglobulin-like domain and mediates cell adhesion properties.</text>
</comment>
<comment type="similarity">
    <text evidence="4">Belongs to the X(+)/potassium ATPases subunit beta family.</text>
</comment>
<proteinExistence type="evidence at transcript level"/>
<name>AT1B2_RABIT</name>